<sequence>MITSFPVRNFLPRVTITSCAFFSKESTSAAGTVAEKKESELQKFAGKSNLLEKKKVGIFGTSTVPINTNFPNPKGVVDYDPDFSIKELVAELPNTRKTQGAKLSEEIKNAFNSVSIEKTELLEDIGFVRHNEARVDYRFDTQEKLDLWKIGCDSDWKEGFSTCSLVNSDRGTAVFSGNISTKVLKDGRVERAGWASMKLEDRKAFNRKKFLSKWRNFSHLLLKVRGDGRSYKIMLHSPLSMDFTWGDSFSHPLHTHGGPYWQYEKIPFSKFFHTVAGRIQDRQYRVNLEDTSSIGIVLMDRIDGDFRLEIDYIGVYNDTTHVEDFAYETYTLPVFNTHGF</sequence>
<name>CIA30_CAEEL</name>
<comment type="function">
    <text evidence="2">Chaperone protein involved in the assembly of the mitochondrial NADH:ubiquinone oxidoreductase complex (complex I). Required for normal growth and reproduction.</text>
</comment>
<comment type="subcellular location">
    <subcellularLocation>
        <location evidence="3">Mitochondrion</location>
    </subcellularLocation>
</comment>
<comment type="disruption phenotype">
    <text evidence="2">RNAi-mediated knockdown impairs mitochondrial complex I assembly. Reduced body size, reduced fat content, fewer embryos and an extended egg laying period. These phenotypes are exacerbated when nuaf-3 is simultaneously knocked down.</text>
</comment>
<comment type="similarity">
    <text evidence="3">Belongs to the CIA30 family.</text>
</comment>
<dbReference type="EMBL" id="Z77654">
    <property type="protein sequence ID" value="CAB01129.1"/>
    <property type="molecule type" value="Genomic_DNA"/>
</dbReference>
<dbReference type="PIR" id="T20097">
    <property type="entry name" value="T20097"/>
</dbReference>
<dbReference type="RefSeq" id="NP_506361.1">
    <property type="nucleotide sequence ID" value="NM_073960.5"/>
</dbReference>
<dbReference type="SMR" id="Q18726"/>
<dbReference type="BioGRID" id="48459">
    <property type="interactions" value="2"/>
</dbReference>
<dbReference type="FunCoup" id="Q18726">
    <property type="interactions" value="1558"/>
</dbReference>
<dbReference type="STRING" id="6239.C50B8.3.1"/>
<dbReference type="PaxDb" id="6239-C50B8.3"/>
<dbReference type="PeptideAtlas" id="Q18726"/>
<dbReference type="EnsemblMetazoa" id="C50B8.3.1">
    <property type="protein sequence ID" value="C50B8.3.1"/>
    <property type="gene ID" value="WBGene00008225"/>
</dbReference>
<dbReference type="GeneID" id="183640"/>
<dbReference type="KEGG" id="cel:CELE_C50B8.3"/>
<dbReference type="UCSC" id="C50B8.3">
    <property type="organism name" value="c. elegans"/>
</dbReference>
<dbReference type="AGR" id="WB:WBGene00008225"/>
<dbReference type="CTD" id="183640"/>
<dbReference type="WormBase" id="C50B8.3">
    <property type="protein sequence ID" value="CE08883"/>
    <property type="gene ID" value="WBGene00008225"/>
    <property type="gene designation" value="nuaf-1"/>
</dbReference>
<dbReference type="eggNOG" id="KOG2435">
    <property type="taxonomic scope" value="Eukaryota"/>
</dbReference>
<dbReference type="GeneTree" id="ENSGT00390000007200"/>
<dbReference type="HOGENOM" id="CLU_059028_2_2_1"/>
<dbReference type="InParanoid" id="Q18726"/>
<dbReference type="OMA" id="SMKLEDR"/>
<dbReference type="OrthoDB" id="42561at2759"/>
<dbReference type="PhylomeDB" id="Q18726"/>
<dbReference type="PRO" id="PR:Q18726"/>
<dbReference type="Proteomes" id="UP000001940">
    <property type="component" value="Chromosome V"/>
</dbReference>
<dbReference type="Bgee" id="WBGene00008225">
    <property type="expression patterns" value="Expressed in germ line (C elegans) and 4 other cell types or tissues"/>
</dbReference>
<dbReference type="GO" id="GO:0005739">
    <property type="term" value="C:mitochondrion"/>
    <property type="evidence" value="ECO:0000318"/>
    <property type="project" value="GO_Central"/>
</dbReference>
<dbReference type="GO" id="GO:0051082">
    <property type="term" value="F:unfolded protein binding"/>
    <property type="evidence" value="ECO:0000318"/>
    <property type="project" value="GO_Central"/>
</dbReference>
<dbReference type="GO" id="GO:0006120">
    <property type="term" value="P:mitochondrial electron transport, NADH to ubiquinone"/>
    <property type="evidence" value="ECO:0000318"/>
    <property type="project" value="GO_Central"/>
</dbReference>
<dbReference type="GO" id="GO:0032981">
    <property type="term" value="P:mitochondrial respiratory chain complex I assembly"/>
    <property type="evidence" value="ECO:0000315"/>
    <property type="project" value="WormBase"/>
</dbReference>
<dbReference type="InterPro" id="IPR008979">
    <property type="entry name" value="Galactose-bd-like_sf"/>
</dbReference>
<dbReference type="InterPro" id="IPR013857">
    <property type="entry name" value="NADH-UbQ_OxRdtase-assoc_prot30"/>
</dbReference>
<dbReference type="InterPro" id="IPR039131">
    <property type="entry name" value="NDUFAF1"/>
</dbReference>
<dbReference type="PANTHER" id="PTHR13194">
    <property type="entry name" value="COMPLEX I INTERMEDIATE-ASSOCIATED PROTEIN 30"/>
    <property type="match status" value="1"/>
</dbReference>
<dbReference type="PANTHER" id="PTHR13194:SF18">
    <property type="entry name" value="COMPLEX I INTERMEDIATE-ASSOCIATED PROTEIN 30, MITOCHONDRIAL"/>
    <property type="match status" value="1"/>
</dbReference>
<dbReference type="Pfam" id="PF08547">
    <property type="entry name" value="CIA30"/>
    <property type="match status" value="1"/>
</dbReference>
<dbReference type="SUPFAM" id="SSF49785">
    <property type="entry name" value="Galactose-binding domain-like"/>
    <property type="match status" value="1"/>
</dbReference>
<feature type="transit peptide" description="Mitochondrion" evidence="1">
    <location>
        <begin position="1"/>
        <end status="unknown"/>
    </location>
</feature>
<feature type="chain" id="PRO_0000005466" description="Probable complex I intermediate-associated protein 30, mitochondrial">
    <location>
        <begin status="unknown"/>
        <end position="340"/>
    </location>
</feature>
<proteinExistence type="inferred from homology"/>
<gene>
    <name type="primary">nuaf-1</name>
    <name type="ORF">C50B8.3</name>
</gene>
<accession>Q18726</accession>
<keyword id="KW-0143">Chaperone</keyword>
<keyword id="KW-0496">Mitochondrion</keyword>
<keyword id="KW-1185">Reference proteome</keyword>
<keyword id="KW-0809">Transit peptide</keyword>
<evidence type="ECO:0000255" key="1"/>
<evidence type="ECO:0000269" key="2">
    <source>
    </source>
</evidence>
<evidence type="ECO:0000305" key="3"/>
<reference key="1">
    <citation type="journal article" date="1998" name="Science">
        <title>Genome sequence of the nematode C. elegans: a platform for investigating biology.</title>
        <authorList>
            <consortium name="The C. elegans sequencing consortium"/>
        </authorList>
    </citation>
    <scope>NUCLEOTIDE SEQUENCE [LARGE SCALE GENOMIC DNA]</scope>
    <source>
        <strain>Bristol N2</strain>
    </source>
</reference>
<reference key="2">
    <citation type="journal article" date="2012" name="Mitochondrion">
        <title>Identification and functional analysis of mitochondrial complex I assembly factor homologues in C. elegans.</title>
        <authorList>
            <person name="van den Ecker D."/>
            <person name="van den Brand M.A."/>
            <person name="Ariaans G."/>
            <person name="Hoffmann M."/>
            <person name="Bossinger O."/>
            <person name="Mayatepek E."/>
            <person name="Nijtmans L.G."/>
            <person name="Distelmaier F."/>
        </authorList>
    </citation>
    <scope>FUNCTION</scope>
    <scope>DISRUPTION PHENOTYPE</scope>
</reference>
<protein>
    <recommendedName>
        <fullName>Probable complex I intermediate-associated protein 30, mitochondrial</fullName>
    </recommendedName>
    <alternativeName>
        <fullName>NADH ubiquinone oxidoreductase assembly factor 1</fullName>
    </alternativeName>
</protein>
<organism>
    <name type="scientific">Caenorhabditis elegans</name>
    <dbReference type="NCBI Taxonomy" id="6239"/>
    <lineage>
        <taxon>Eukaryota</taxon>
        <taxon>Metazoa</taxon>
        <taxon>Ecdysozoa</taxon>
        <taxon>Nematoda</taxon>
        <taxon>Chromadorea</taxon>
        <taxon>Rhabditida</taxon>
        <taxon>Rhabditina</taxon>
        <taxon>Rhabditomorpha</taxon>
        <taxon>Rhabditoidea</taxon>
        <taxon>Rhabditidae</taxon>
        <taxon>Peloderinae</taxon>
        <taxon>Caenorhabditis</taxon>
    </lineage>
</organism>